<protein>
    <recommendedName>
        <fullName evidence="1">Gamma-glutamyl phosphate reductase</fullName>
        <shortName evidence="1">GPR</shortName>
        <ecNumber evidence="1">1.2.1.41</ecNumber>
    </recommendedName>
    <alternativeName>
        <fullName evidence="1">Glutamate-5-semialdehyde dehydrogenase</fullName>
    </alternativeName>
    <alternativeName>
        <fullName evidence="1">Glutamyl-gamma-semialdehyde dehydrogenase</fullName>
        <shortName evidence="1">GSA dehydrogenase</shortName>
    </alternativeName>
</protein>
<comment type="function">
    <text evidence="1">Catalyzes the NADPH-dependent reduction of L-glutamate 5-phosphate into L-glutamate 5-semialdehyde and phosphate. The product spontaneously undergoes cyclization to form 1-pyrroline-5-carboxylate.</text>
</comment>
<comment type="catalytic activity">
    <reaction evidence="1">
        <text>L-glutamate 5-semialdehyde + phosphate + NADP(+) = L-glutamyl 5-phosphate + NADPH + H(+)</text>
        <dbReference type="Rhea" id="RHEA:19541"/>
        <dbReference type="ChEBI" id="CHEBI:15378"/>
        <dbReference type="ChEBI" id="CHEBI:43474"/>
        <dbReference type="ChEBI" id="CHEBI:57783"/>
        <dbReference type="ChEBI" id="CHEBI:58066"/>
        <dbReference type="ChEBI" id="CHEBI:58274"/>
        <dbReference type="ChEBI" id="CHEBI:58349"/>
        <dbReference type="EC" id="1.2.1.41"/>
    </reaction>
</comment>
<comment type="pathway">
    <text evidence="1">Amino-acid biosynthesis; L-proline biosynthesis; L-glutamate 5-semialdehyde from L-glutamate: step 2/2.</text>
</comment>
<comment type="subcellular location">
    <subcellularLocation>
        <location evidence="1">Cytoplasm</location>
    </subcellularLocation>
</comment>
<comment type="similarity">
    <text evidence="1">Belongs to the gamma-glutamyl phosphate reductase family.</text>
</comment>
<name>PROA_BRUO2</name>
<dbReference type="EC" id="1.2.1.41" evidence="1"/>
<dbReference type="EMBL" id="CP000708">
    <property type="protein sequence ID" value="ABQ61250.1"/>
    <property type="molecule type" value="Genomic_DNA"/>
</dbReference>
<dbReference type="RefSeq" id="WP_006155594.1">
    <property type="nucleotide sequence ID" value="NC_009505.1"/>
</dbReference>
<dbReference type="SMR" id="A5VSI3"/>
<dbReference type="GeneID" id="45125123"/>
<dbReference type="KEGG" id="bov:BOV_1776"/>
<dbReference type="HOGENOM" id="CLU_030231_0_0_5"/>
<dbReference type="UniPathway" id="UPA00098">
    <property type="reaction ID" value="UER00360"/>
</dbReference>
<dbReference type="Proteomes" id="UP000006383">
    <property type="component" value="Chromosome I"/>
</dbReference>
<dbReference type="GO" id="GO:0005737">
    <property type="term" value="C:cytoplasm"/>
    <property type="evidence" value="ECO:0007669"/>
    <property type="project" value="UniProtKB-SubCell"/>
</dbReference>
<dbReference type="GO" id="GO:0004350">
    <property type="term" value="F:glutamate-5-semialdehyde dehydrogenase activity"/>
    <property type="evidence" value="ECO:0007669"/>
    <property type="project" value="UniProtKB-UniRule"/>
</dbReference>
<dbReference type="GO" id="GO:0050661">
    <property type="term" value="F:NADP binding"/>
    <property type="evidence" value="ECO:0007669"/>
    <property type="project" value="InterPro"/>
</dbReference>
<dbReference type="GO" id="GO:0055129">
    <property type="term" value="P:L-proline biosynthetic process"/>
    <property type="evidence" value="ECO:0007669"/>
    <property type="project" value="UniProtKB-UniRule"/>
</dbReference>
<dbReference type="CDD" id="cd07079">
    <property type="entry name" value="ALDH_F18-19_ProA-GPR"/>
    <property type="match status" value="1"/>
</dbReference>
<dbReference type="Gene3D" id="3.40.605.10">
    <property type="entry name" value="Aldehyde Dehydrogenase, Chain A, domain 1"/>
    <property type="match status" value="1"/>
</dbReference>
<dbReference type="Gene3D" id="3.40.309.10">
    <property type="entry name" value="Aldehyde Dehydrogenase, Chain A, domain 2"/>
    <property type="match status" value="1"/>
</dbReference>
<dbReference type="HAMAP" id="MF_00412">
    <property type="entry name" value="ProA"/>
    <property type="match status" value="1"/>
</dbReference>
<dbReference type="InterPro" id="IPR016161">
    <property type="entry name" value="Ald_DH/histidinol_DH"/>
</dbReference>
<dbReference type="InterPro" id="IPR016163">
    <property type="entry name" value="Ald_DH_C"/>
</dbReference>
<dbReference type="InterPro" id="IPR016162">
    <property type="entry name" value="Ald_DH_N"/>
</dbReference>
<dbReference type="InterPro" id="IPR015590">
    <property type="entry name" value="Aldehyde_DH_dom"/>
</dbReference>
<dbReference type="InterPro" id="IPR020593">
    <property type="entry name" value="G-glutamylP_reductase_CS"/>
</dbReference>
<dbReference type="InterPro" id="IPR012134">
    <property type="entry name" value="Glu-5-SA_DH"/>
</dbReference>
<dbReference type="InterPro" id="IPR000965">
    <property type="entry name" value="GPR_dom"/>
</dbReference>
<dbReference type="NCBIfam" id="NF001221">
    <property type="entry name" value="PRK00197.1"/>
    <property type="match status" value="1"/>
</dbReference>
<dbReference type="NCBIfam" id="TIGR00407">
    <property type="entry name" value="proA"/>
    <property type="match status" value="1"/>
</dbReference>
<dbReference type="PANTHER" id="PTHR11063:SF8">
    <property type="entry name" value="DELTA-1-PYRROLINE-5-CARBOXYLATE SYNTHASE"/>
    <property type="match status" value="1"/>
</dbReference>
<dbReference type="PANTHER" id="PTHR11063">
    <property type="entry name" value="GLUTAMATE SEMIALDEHYDE DEHYDROGENASE"/>
    <property type="match status" value="1"/>
</dbReference>
<dbReference type="Pfam" id="PF00171">
    <property type="entry name" value="Aldedh"/>
    <property type="match status" value="1"/>
</dbReference>
<dbReference type="PIRSF" id="PIRSF000151">
    <property type="entry name" value="GPR"/>
    <property type="match status" value="1"/>
</dbReference>
<dbReference type="SUPFAM" id="SSF53720">
    <property type="entry name" value="ALDH-like"/>
    <property type="match status" value="1"/>
</dbReference>
<dbReference type="PROSITE" id="PS01223">
    <property type="entry name" value="PROA"/>
    <property type="match status" value="1"/>
</dbReference>
<feature type="chain" id="PRO_1000193577" description="Gamma-glutamyl phosphate reductase">
    <location>
        <begin position="1"/>
        <end position="427"/>
    </location>
</feature>
<sequence length="427" mass="44729">MLVKADMTKDIAQVMAEVGRKAKAAAAPLSIATSEQKNKALNAAADAILEARADILEANRLDLANAEKNGMAASFVDRLTLNEARIDAIAEGIRTIATLPDPVGEVIAEWDRPNGLHIERVRTPLGVIGVIYESRPNVTADAGALCLKAGNAVILRGGSDSAHSSAAIHKALVKGLEAANLPADAIQIVPVTDRAAVGEMLKGLGGAIDVIVPRGGKSLVARVQSEARVPVFAHLEGICHLYIDKSADLDMARRIALDAKMRRTGICGAAETLLVDRAVASTHLAPILGDLAAGGCEIRGSAEVLALYPAAKPATEEDWSTEYLDAIISVALVDGISGAIDHINRYSSHHTEAIVAEDAQTVARFFNEIDSAILLHNASTQFADGGEFGMGAEIGIATGKMHARGPVGVEQLTSFKYRVRGSGQVRG</sequence>
<gene>
    <name evidence="1" type="primary">proA</name>
    <name type="ordered locus">BOV_1776</name>
</gene>
<proteinExistence type="inferred from homology"/>
<accession>A5VSI3</accession>
<evidence type="ECO:0000255" key="1">
    <source>
        <dbReference type="HAMAP-Rule" id="MF_00412"/>
    </source>
</evidence>
<reference key="1">
    <citation type="journal article" date="2009" name="PLoS ONE">
        <title>Genome degradation in Brucella ovis corresponds with narrowing of its host range and tissue tropism.</title>
        <authorList>
            <person name="Tsolis R.M."/>
            <person name="Seshadri R."/>
            <person name="Santos R.L."/>
            <person name="Sangari F.J."/>
            <person name="Lobo J.M."/>
            <person name="de Jong M.F."/>
            <person name="Ren Q."/>
            <person name="Myers G."/>
            <person name="Brinkac L.M."/>
            <person name="Nelson W.C."/>
            <person name="Deboy R.T."/>
            <person name="Angiuoli S."/>
            <person name="Khouri H."/>
            <person name="Dimitrov G."/>
            <person name="Robinson J.R."/>
            <person name="Mulligan S."/>
            <person name="Walker R.L."/>
            <person name="Elzer P.E."/>
            <person name="Hassan K.A."/>
            <person name="Paulsen I.T."/>
        </authorList>
    </citation>
    <scope>NUCLEOTIDE SEQUENCE [LARGE SCALE GENOMIC DNA]</scope>
    <source>
        <strain>ATCC 25840 / 63/290 / NCTC 10512</strain>
    </source>
</reference>
<keyword id="KW-0028">Amino-acid biosynthesis</keyword>
<keyword id="KW-0963">Cytoplasm</keyword>
<keyword id="KW-0521">NADP</keyword>
<keyword id="KW-0560">Oxidoreductase</keyword>
<keyword id="KW-0641">Proline biosynthesis</keyword>
<organism>
    <name type="scientific">Brucella ovis (strain ATCC 25840 / 63/290 / NCTC 10512)</name>
    <dbReference type="NCBI Taxonomy" id="444178"/>
    <lineage>
        <taxon>Bacteria</taxon>
        <taxon>Pseudomonadati</taxon>
        <taxon>Pseudomonadota</taxon>
        <taxon>Alphaproteobacteria</taxon>
        <taxon>Hyphomicrobiales</taxon>
        <taxon>Brucellaceae</taxon>
        <taxon>Brucella/Ochrobactrum group</taxon>
        <taxon>Brucella</taxon>
    </lineage>
</organism>